<accession>A3M837</accession>
<sequence length="96" mass="10157">MSNIRPLHDRVVIRRVEEETKTAGGILLPGSAAEKPSQGEVIAVGNGQITDNGVRALDVKVGDKVLFGTYAGTTVKVNGEELLIMKESDILAVLEG</sequence>
<reference key="1">
    <citation type="journal article" date="2007" name="Genes Dev.">
        <title>New insights into Acinetobacter baumannii pathogenesis revealed by high-density pyrosequencing and transposon mutagenesis.</title>
        <authorList>
            <person name="Smith M.G."/>
            <person name="Gianoulis T.A."/>
            <person name="Pukatzki S."/>
            <person name="Mekalanos J.J."/>
            <person name="Ornston L.N."/>
            <person name="Gerstein M."/>
            <person name="Snyder M."/>
        </authorList>
    </citation>
    <scope>NUCLEOTIDE SEQUENCE [LARGE SCALE GENOMIC DNA]</scope>
    <source>
        <strain>ATCC 17978 / DSM 105126 / CIP 53.77 / LMG 1025 / NCDC KC755 / 5377</strain>
    </source>
</reference>
<gene>
    <name evidence="1" type="primary">groES</name>
    <name evidence="1" type="synonym">groS</name>
    <name type="ordered locus">A1S_2665</name>
</gene>
<organism>
    <name type="scientific">Acinetobacter baumannii (strain ATCC 17978 / DSM 105126 / CIP 53.77 / LMG 1025 / NCDC KC755 / 5377)</name>
    <dbReference type="NCBI Taxonomy" id="400667"/>
    <lineage>
        <taxon>Bacteria</taxon>
        <taxon>Pseudomonadati</taxon>
        <taxon>Pseudomonadota</taxon>
        <taxon>Gammaproteobacteria</taxon>
        <taxon>Moraxellales</taxon>
        <taxon>Moraxellaceae</taxon>
        <taxon>Acinetobacter</taxon>
        <taxon>Acinetobacter calcoaceticus/baumannii complex</taxon>
    </lineage>
</organism>
<protein>
    <recommendedName>
        <fullName evidence="1">Co-chaperonin GroES</fullName>
    </recommendedName>
    <alternativeName>
        <fullName evidence="1">10 kDa chaperonin</fullName>
    </alternativeName>
    <alternativeName>
        <fullName evidence="1">Chaperonin-10</fullName>
        <shortName evidence="1">Cpn10</shortName>
    </alternativeName>
</protein>
<dbReference type="EMBL" id="CP000521">
    <property type="protein sequence ID" value="ABO13081.1"/>
    <property type="molecule type" value="Genomic_DNA"/>
</dbReference>
<dbReference type="RefSeq" id="WP_000065579.1">
    <property type="nucleotide sequence ID" value="NZ_CP053098.1"/>
</dbReference>
<dbReference type="SMR" id="A3M837"/>
<dbReference type="KEGG" id="acb:A1S_2665"/>
<dbReference type="HOGENOM" id="CLU_132825_2_0_6"/>
<dbReference type="GO" id="GO:0005737">
    <property type="term" value="C:cytoplasm"/>
    <property type="evidence" value="ECO:0007669"/>
    <property type="project" value="UniProtKB-SubCell"/>
</dbReference>
<dbReference type="GO" id="GO:0005524">
    <property type="term" value="F:ATP binding"/>
    <property type="evidence" value="ECO:0007669"/>
    <property type="project" value="InterPro"/>
</dbReference>
<dbReference type="GO" id="GO:0046872">
    <property type="term" value="F:metal ion binding"/>
    <property type="evidence" value="ECO:0007669"/>
    <property type="project" value="TreeGrafter"/>
</dbReference>
<dbReference type="GO" id="GO:0044183">
    <property type="term" value="F:protein folding chaperone"/>
    <property type="evidence" value="ECO:0007669"/>
    <property type="project" value="InterPro"/>
</dbReference>
<dbReference type="GO" id="GO:0051087">
    <property type="term" value="F:protein-folding chaperone binding"/>
    <property type="evidence" value="ECO:0007669"/>
    <property type="project" value="TreeGrafter"/>
</dbReference>
<dbReference type="GO" id="GO:0051082">
    <property type="term" value="F:unfolded protein binding"/>
    <property type="evidence" value="ECO:0007669"/>
    <property type="project" value="TreeGrafter"/>
</dbReference>
<dbReference type="GO" id="GO:0051085">
    <property type="term" value="P:chaperone cofactor-dependent protein refolding"/>
    <property type="evidence" value="ECO:0007669"/>
    <property type="project" value="TreeGrafter"/>
</dbReference>
<dbReference type="CDD" id="cd00320">
    <property type="entry name" value="cpn10"/>
    <property type="match status" value="1"/>
</dbReference>
<dbReference type="FunFam" id="2.30.33.40:FF:000001">
    <property type="entry name" value="10 kDa chaperonin"/>
    <property type="match status" value="1"/>
</dbReference>
<dbReference type="Gene3D" id="2.30.33.40">
    <property type="entry name" value="GroES chaperonin"/>
    <property type="match status" value="1"/>
</dbReference>
<dbReference type="HAMAP" id="MF_00580">
    <property type="entry name" value="CH10"/>
    <property type="match status" value="1"/>
</dbReference>
<dbReference type="InterPro" id="IPR020818">
    <property type="entry name" value="Chaperonin_GroES"/>
</dbReference>
<dbReference type="InterPro" id="IPR037124">
    <property type="entry name" value="Chaperonin_GroES_sf"/>
</dbReference>
<dbReference type="InterPro" id="IPR018369">
    <property type="entry name" value="Chaprnonin_Cpn10_CS"/>
</dbReference>
<dbReference type="InterPro" id="IPR011032">
    <property type="entry name" value="GroES-like_sf"/>
</dbReference>
<dbReference type="NCBIfam" id="NF001527">
    <property type="entry name" value="PRK00364.1-2"/>
    <property type="match status" value="1"/>
</dbReference>
<dbReference type="NCBIfam" id="NF001529">
    <property type="entry name" value="PRK00364.1-5"/>
    <property type="match status" value="1"/>
</dbReference>
<dbReference type="NCBIfam" id="NF001531">
    <property type="entry name" value="PRK00364.2-2"/>
    <property type="match status" value="1"/>
</dbReference>
<dbReference type="NCBIfam" id="NF001533">
    <property type="entry name" value="PRK00364.2-4"/>
    <property type="match status" value="1"/>
</dbReference>
<dbReference type="PANTHER" id="PTHR10772">
    <property type="entry name" value="10 KDA HEAT SHOCK PROTEIN"/>
    <property type="match status" value="1"/>
</dbReference>
<dbReference type="PANTHER" id="PTHR10772:SF58">
    <property type="entry name" value="CO-CHAPERONIN GROES"/>
    <property type="match status" value="1"/>
</dbReference>
<dbReference type="Pfam" id="PF00166">
    <property type="entry name" value="Cpn10"/>
    <property type="match status" value="1"/>
</dbReference>
<dbReference type="PRINTS" id="PR00297">
    <property type="entry name" value="CHAPERONIN10"/>
</dbReference>
<dbReference type="SMART" id="SM00883">
    <property type="entry name" value="Cpn10"/>
    <property type="match status" value="1"/>
</dbReference>
<dbReference type="SUPFAM" id="SSF50129">
    <property type="entry name" value="GroES-like"/>
    <property type="match status" value="1"/>
</dbReference>
<dbReference type="PROSITE" id="PS00681">
    <property type="entry name" value="CHAPERONINS_CPN10"/>
    <property type="match status" value="1"/>
</dbReference>
<proteinExistence type="inferred from homology"/>
<evidence type="ECO:0000255" key="1">
    <source>
        <dbReference type="HAMAP-Rule" id="MF_00580"/>
    </source>
</evidence>
<comment type="function">
    <text evidence="1">Together with the chaperonin GroEL, plays an essential role in assisting protein folding. The GroEL-GroES system forms a nano-cage that allows encapsulation of the non-native substrate proteins and provides a physical environment optimized to promote and accelerate protein folding. GroES binds to the apical surface of the GroEL ring, thereby capping the opening of the GroEL channel.</text>
</comment>
<comment type="subunit">
    <text evidence="1">Heptamer of 7 subunits arranged in a ring. Interacts with the chaperonin GroEL.</text>
</comment>
<comment type="subcellular location">
    <subcellularLocation>
        <location evidence="1">Cytoplasm</location>
    </subcellularLocation>
</comment>
<comment type="similarity">
    <text evidence="1">Belongs to the GroES chaperonin family.</text>
</comment>
<name>CH10_ACIBT</name>
<feature type="chain" id="PRO_1000025197" description="Co-chaperonin GroES">
    <location>
        <begin position="1"/>
        <end position="96"/>
    </location>
</feature>
<keyword id="KW-0143">Chaperone</keyword>
<keyword id="KW-0963">Cytoplasm</keyword>